<accession>B7V655</accession>
<dbReference type="EMBL" id="FM209186">
    <property type="protein sequence ID" value="CAW25403.1"/>
    <property type="molecule type" value="Genomic_DNA"/>
</dbReference>
<dbReference type="RefSeq" id="WP_003093711.1">
    <property type="nucleotide sequence ID" value="NC_011770.1"/>
</dbReference>
<dbReference type="SMR" id="B7V655"/>
<dbReference type="GeneID" id="77219209"/>
<dbReference type="KEGG" id="pag:PLES_06761"/>
<dbReference type="HOGENOM" id="CLU_093315_2_2_6"/>
<dbReference type="GO" id="GO:1990904">
    <property type="term" value="C:ribonucleoprotein complex"/>
    <property type="evidence" value="ECO:0007669"/>
    <property type="project" value="UniProtKB-KW"/>
</dbReference>
<dbReference type="GO" id="GO:0005840">
    <property type="term" value="C:ribosome"/>
    <property type="evidence" value="ECO:0007669"/>
    <property type="project" value="UniProtKB-KW"/>
</dbReference>
<dbReference type="GO" id="GO:0019843">
    <property type="term" value="F:rRNA binding"/>
    <property type="evidence" value="ECO:0007669"/>
    <property type="project" value="UniProtKB-UniRule"/>
</dbReference>
<dbReference type="GO" id="GO:0003735">
    <property type="term" value="F:structural constituent of ribosome"/>
    <property type="evidence" value="ECO:0007669"/>
    <property type="project" value="InterPro"/>
</dbReference>
<dbReference type="GO" id="GO:0006412">
    <property type="term" value="P:translation"/>
    <property type="evidence" value="ECO:0007669"/>
    <property type="project" value="UniProtKB-UniRule"/>
</dbReference>
<dbReference type="CDD" id="cd06089">
    <property type="entry name" value="KOW_RPL26"/>
    <property type="match status" value="1"/>
</dbReference>
<dbReference type="FunFam" id="2.30.30.30:FF:000004">
    <property type="entry name" value="50S ribosomal protein L24"/>
    <property type="match status" value="1"/>
</dbReference>
<dbReference type="Gene3D" id="2.30.30.30">
    <property type="match status" value="1"/>
</dbReference>
<dbReference type="HAMAP" id="MF_01326_B">
    <property type="entry name" value="Ribosomal_uL24_B"/>
    <property type="match status" value="1"/>
</dbReference>
<dbReference type="InterPro" id="IPR005824">
    <property type="entry name" value="KOW"/>
</dbReference>
<dbReference type="InterPro" id="IPR014722">
    <property type="entry name" value="Rib_uL2_dom2"/>
</dbReference>
<dbReference type="InterPro" id="IPR003256">
    <property type="entry name" value="Ribosomal_uL24"/>
</dbReference>
<dbReference type="InterPro" id="IPR005825">
    <property type="entry name" value="Ribosomal_uL24_CS"/>
</dbReference>
<dbReference type="InterPro" id="IPR041988">
    <property type="entry name" value="Ribosomal_uL24_KOW"/>
</dbReference>
<dbReference type="InterPro" id="IPR008991">
    <property type="entry name" value="Translation_prot_SH3-like_sf"/>
</dbReference>
<dbReference type="NCBIfam" id="TIGR01079">
    <property type="entry name" value="rplX_bact"/>
    <property type="match status" value="1"/>
</dbReference>
<dbReference type="PANTHER" id="PTHR12903">
    <property type="entry name" value="MITOCHONDRIAL RIBOSOMAL PROTEIN L24"/>
    <property type="match status" value="1"/>
</dbReference>
<dbReference type="Pfam" id="PF00467">
    <property type="entry name" value="KOW"/>
    <property type="match status" value="1"/>
</dbReference>
<dbReference type="Pfam" id="PF17136">
    <property type="entry name" value="ribosomal_L24"/>
    <property type="match status" value="1"/>
</dbReference>
<dbReference type="SMART" id="SM00739">
    <property type="entry name" value="KOW"/>
    <property type="match status" value="1"/>
</dbReference>
<dbReference type="SUPFAM" id="SSF50104">
    <property type="entry name" value="Translation proteins SH3-like domain"/>
    <property type="match status" value="1"/>
</dbReference>
<dbReference type="PROSITE" id="PS01108">
    <property type="entry name" value="RIBOSOMAL_L24"/>
    <property type="match status" value="1"/>
</dbReference>
<proteinExistence type="inferred from homology"/>
<protein>
    <recommendedName>
        <fullName evidence="1">Large ribosomal subunit protein uL24</fullName>
    </recommendedName>
    <alternativeName>
        <fullName evidence="2">50S ribosomal protein L24</fullName>
    </alternativeName>
</protein>
<organism>
    <name type="scientific">Pseudomonas aeruginosa (strain LESB58)</name>
    <dbReference type="NCBI Taxonomy" id="557722"/>
    <lineage>
        <taxon>Bacteria</taxon>
        <taxon>Pseudomonadati</taxon>
        <taxon>Pseudomonadota</taxon>
        <taxon>Gammaproteobacteria</taxon>
        <taxon>Pseudomonadales</taxon>
        <taxon>Pseudomonadaceae</taxon>
        <taxon>Pseudomonas</taxon>
    </lineage>
</organism>
<name>RL24_PSEA8</name>
<gene>
    <name evidence="1" type="primary">rplX</name>
    <name type="ordered locus">PLES_06761</name>
</gene>
<evidence type="ECO:0000255" key="1">
    <source>
        <dbReference type="HAMAP-Rule" id="MF_01326"/>
    </source>
</evidence>
<evidence type="ECO:0000305" key="2"/>
<reference key="1">
    <citation type="journal article" date="2009" name="Genome Res.">
        <title>Newly introduced genomic prophage islands are critical determinants of in vivo competitiveness in the Liverpool epidemic strain of Pseudomonas aeruginosa.</title>
        <authorList>
            <person name="Winstanley C."/>
            <person name="Langille M.G.I."/>
            <person name="Fothergill J.L."/>
            <person name="Kukavica-Ibrulj I."/>
            <person name="Paradis-Bleau C."/>
            <person name="Sanschagrin F."/>
            <person name="Thomson N.R."/>
            <person name="Winsor G.L."/>
            <person name="Quail M.A."/>
            <person name="Lennard N."/>
            <person name="Bignell A."/>
            <person name="Clarke L."/>
            <person name="Seeger K."/>
            <person name="Saunders D."/>
            <person name="Harris D."/>
            <person name="Parkhill J."/>
            <person name="Hancock R.E.W."/>
            <person name="Brinkman F.S.L."/>
            <person name="Levesque R.C."/>
        </authorList>
    </citation>
    <scope>NUCLEOTIDE SEQUENCE [LARGE SCALE GENOMIC DNA]</scope>
    <source>
        <strain>LESB58</strain>
    </source>
</reference>
<sequence length="104" mass="11470">MQKIRRDDEVIVIAGKDKGKRGKVLKVLADDRLVVGGVNLIKRHTKPNPMLGQQGGIVEKEAPLHVSNVAIFNTETSKADRVGFKVEDGKKIRVFKSTQKPVQA</sequence>
<comment type="function">
    <text evidence="1">One of two assembly initiator proteins, it binds directly to the 5'-end of the 23S rRNA, where it nucleates assembly of the 50S subunit.</text>
</comment>
<comment type="function">
    <text evidence="1">One of the proteins that surrounds the polypeptide exit tunnel on the outside of the subunit.</text>
</comment>
<comment type="subunit">
    <text evidence="1">Part of the 50S ribosomal subunit.</text>
</comment>
<comment type="similarity">
    <text evidence="1">Belongs to the universal ribosomal protein uL24 family.</text>
</comment>
<feature type="chain" id="PRO_1000142024" description="Large ribosomal subunit protein uL24">
    <location>
        <begin position="1"/>
        <end position="104"/>
    </location>
</feature>
<keyword id="KW-0687">Ribonucleoprotein</keyword>
<keyword id="KW-0689">Ribosomal protein</keyword>
<keyword id="KW-0694">RNA-binding</keyword>
<keyword id="KW-0699">rRNA-binding</keyword>